<keyword id="KW-0002">3D-structure</keyword>
<keyword id="KW-0067">ATP-binding</keyword>
<keyword id="KW-0963">Cytoplasm</keyword>
<keyword id="KW-0436">Ligase</keyword>
<keyword id="KW-0547">Nucleotide-binding</keyword>
<reference key="1">
    <citation type="journal article" date="2004" name="J. Infect. Dis.">
        <title>Progress toward characterization of the group A Streptococcus metagenome: complete genome sequence of a macrolide-resistant serotype M6 strain.</title>
        <authorList>
            <person name="Banks D.J."/>
            <person name="Porcella S.F."/>
            <person name="Barbian K.D."/>
            <person name="Beres S.B."/>
            <person name="Philips L.E."/>
            <person name="Voyich J.M."/>
            <person name="DeLeo F.R."/>
            <person name="Martin J.M."/>
            <person name="Somerville G.A."/>
            <person name="Musser J.M."/>
        </authorList>
    </citation>
    <scope>NUCLEOTIDE SEQUENCE [LARGE SCALE GENOMIC DNA]</scope>
    <source>
        <strain>ATCC BAA-946 / MGAS10394</strain>
    </source>
</reference>
<accession>Q5XBN5</accession>
<comment type="function">
    <text evidence="1">Catalyzes the first step in the D-alanylation of lipoteichoic acid (LTA), the activation of D-alanine and its transfer onto the D-alanyl carrier protein (Dcp) DltC. In an ATP-dependent two-step reaction, forms a high energy D-alanyl-AMP intermediate, followed by transfer of the D-alanyl residue as a thiol ester to the phosphopantheinyl prosthetic group of the Dcp. D-alanylation of LTA plays an important role in modulating the properties of the cell wall in Gram-positive bacteria, influencing the net charge of the cell wall.</text>
</comment>
<comment type="catalytic activity">
    <reaction evidence="1">
        <text>holo-[D-alanyl-carrier protein] + D-alanine + ATP = D-alanyl-[D-alanyl-carrier protein] + AMP + diphosphate</text>
        <dbReference type="Rhea" id="RHEA:55132"/>
        <dbReference type="Rhea" id="RHEA-COMP:14102"/>
        <dbReference type="Rhea" id="RHEA-COMP:14103"/>
        <dbReference type="ChEBI" id="CHEBI:30616"/>
        <dbReference type="ChEBI" id="CHEBI:33019"/>
        <dbReference type="ChEBI" id="CHEBI:57416"/>
        <dbReference type="ChEBI" id="CHEBI:64479"/>
        <dbReference type="ChEBI" id="CHEBI:138620"/>
        <dbReference type="ChEBI" id="CHEBI:456215"/>
        <dbReference type="EC" id="6.2.1.54"/>
    </reaction>
</comment>
<comment type="pathway">
    <text evidence="1">Cell wall biogenesis; lipoteichoic acid biosynthesis.</text>
</comment>
<comment type="subcellular location">
    <subcellularLocation>
        <location evidence="1">Cytoplasm</location>
    </subcellularLocation>
</comment>
<comment type="similarity">
    <text evidence="1">Belongs to the ATP-dependent AMP-binding enzyme family. DltA subfamily.</text>
</comment>
<name>DLTA_STRP6</name>
<evidence type="ECO:0000255" key="1">
    <source>
        <dbReference type="HAMAP-Rule" id="MF_00593"/>
    </source>
</evidence>
<evidence type="ECO:0007829" key="2">
    <source>
        <dbReference type="PDB" id="3L8C"/>
    </source>
</evidence>
<dbReference type="EC" id="6.2.1.54" evidence="1"/>
<dbReference type="EMBL" id="CP000003">
    <property type="protein sequence ID" value="AAT87178.1"/>
    <property type="molecule type" value="Genomic_DNA"/>
</dbReference>
<dbReference type="RefSeq" id="WP_002989572.1">
    <property type="nucleotide sequence ID" value="NC_006086.1"/>
</dbReference>
<dbReference type="PDB" id="3L8C">
    <property type="method" value="X-ray"/>
    <property type="resolution" value="2.41 A"/>
    <property type="chains" value="A/B=3-512"/>
</dbReference>
<dbReference type="PDBsum" id="3L8C"/>
<dbReference type="SMR" id="Q5XBN5"/>
<dbReference type="KEGG" id="spa:M6_Spy1043"/>
<dbReference type="HOGENOM" id="CLU_000022_2_12_9"/>
<dbReference type="UniPathway" id="UPA00556"/>
<dbReference type="EvolutionaryTrace" id="Q5XBN5"/>
<dbReference type="Proteomes" id="UP000001167">
    <property type="component" value="Chromosome"/>
</dbReference>
<dbReference type="GO" id="GO:0005737">
    <property type="term" value="C:cytoplasm"/>
    <property type="evidence" value="ECO:0007669"/>
    <property type="project" value="UniProtKB-SubCell"/>
</dbReference>
<dbReference type="GO" id="GO:0005524">
    <property type="term" value="F:ATP binding"/>
    <property type="evidence" value="ECO:0007669"/>
    <property type="project" value="UniProtKB-KW"/>
</dbReference>
<dbReference type="GO" id="GO:0047473">
    <property type="term" value="F:D-alanine [D-alanyl carrier protein] ligase activity"/>
    <property type="evidence" value="ECO:0007669"/>
    <property type="project" value="UniProtKB-UniRule"/>
</dbReference>
<dbReference type="GO" id="GO:0070395">
    <property type="term" value="P:lipoteichoic acid biosynthetic process"/>
    <property type="evidence" value="ECO:0007669"/>
    <property type="project" value="UniProtKB-UniRule"/>
</dbReference>
<dbReference type="CDD" id="cd05945">
    <property type="entry name" value="DltA"/>
    <property type="match status" value="1"/>
</dbReference>
<dbReference type="FunFam" id="3.30.300.30:FF:000012">
    <property type="entry name" value="D-alanine--D-alanyl carrier protein ligase"/>
    <property type="match status" value="1"/>
</dbReference>
<dbReference type="Gene3D" id="3.30.300.30">
    <property type="match status" value="1"/>
</dbReference>
<dbReference type="Gene3D" id="3.40.50.12780">
    <property type="entry name" value="N-terminal domain of ligase-like"/>
    <property type="match status" value="1"/>
</dbReference>
<dbReference type="HAMAP" id="MF_00593">
    <property type="entry name" value="DltA"/>
    <property type="match status" value="1"/>
</dbReference>
<dbReference type="InterPro" id="IPR010071">
    <property type="entry name" value="AA_adenyl_dom"/>
</dbReference>
<dbReference type="InterPro" id="IPR025110">
    <property type="entry name" value="AMP-bd_C"/>
</dbReference>
<dbReference type="InterPro" id="IPR045851">
    <property type="entry name" value="AMP-bd_C_sf"/>
</dbReference>
<dbReference type="InterPro" id="IPR020845">
    <property type="entry name" value="AMP-binding_CS"/>
</dbReference>
<dbReference type="InterPro" id="IPR000873">
    <property type="entry name" value="AMP-dep_synth/lig_dom"/>
</dbReference>
<dbReference type="InterPro" id="IPR042099">
    <property type="entry name" value="ANL_N_sf"/>
</dbReference>
<dbReference type="InterPro" id="IPR010072">
    <property type="entry name" value="DltA"/>
</dbReference>
<dbReference type="InterPro" id="IPR044507">
    <property type="entry name" value="DltA-like"/>
</dbReference>
<dbReference type="NCBIfam" id="TIGR01733">
    <property type="entry name" value="AA-adenyl-dom"/>
    <property type="match status" value="1"/>
</dbReference>
<dbReference type="NCBIfam" id="TIGR01734">
    <property type="entry name" value="D-ala-DACP-lig"/>
    <property type="match status" value="1"/>
</dbReference>
<dbReference type="NCBIfam" id="NF003417">
    <property type="entry name" value="PRK04813.1"/>
    <property type="match status" value="1"/>
</dbReference>
<dbReference type="PANTHER" id="PTHR45398">
    <property type="match status" value="1"/>
</dbReference>
<dbReference type="PANTHER" id="PTHR45398:SF1">
    <property type="entry name" value="ENZYME, PUTATIVE (JCVI)-RELATED"/>
    <property type="match status" value="1"/>
</dbReference>
<dbReference type="Pfam" id="PF00501">
    <property type="entry name" value="AMP-binding"/>
    <property type="match status" value="1"/>
</dbReference>
<dbReference type="Pfam" id="PF13193">
    <property type="entry name" value="AMP-binding_C"/>
    <property type="match status" value="1"/>
</dbReference>
<dbReference type="SUPFAM" id="SSF56801">
    <property type="entry name" value="Acetyl-CoA synthetase-like"/>
    <property type="match status" value="1"/>
</dbReference>
<dbReference type="PROSITE" id="PS00455">
    <property type="entry name" value="AMP_BINDING"/>
    <property type="match status" value="1"/>
</dbReference>
<proteinExistence type="evidence at protein level"/>
<gene>
    <name evidence="1" type="primary">dltA</name>
    <name type="ordered locus">M6_Spy1043</name>
</gene>
<protein>
    <recommendedName>
        <fullName evidence="1">D-alanine--D-alanyl carrier protein ligase</fullName>
        <shortName evidence="1">DCL</shortName>
        <ecNumber evidence="1">6.2.1.54</ecNumber>
    </recommendedName>
    <alternativeName>
        <fullName evidence="1">D-alanine--poly(phosphoribitol) ligase subunit 1</fullName>
    </alternativeName>
    <alternativeName>
        <fullName evidence="1">D-alanine-activating enzyme</fullName>
        <shortName evidence="1">DAE</shortName>
    </alternativeName>
</protein>
<sequence>MIKDMIDSIEQFAQTQADFPVYDCLGERRTYGQLKRDSDSIAAFIDSLALLAKSPVLVFGAQTYDMLATFVALTKSGHAYIPVDVHSAPERILAIIEIAKPSLIIAIEEFPLTIEGISLVSLSEIESAKLAEMPYERTHSVKGDDNYYIIFTSGTTGQPKGVQISHDNLLSFTNWMIEDAAFDVPKQPQMLAQPPYSFDLSVMYWAPTLALGGTLFALPKELVADFKQLFTTIAQLPVGIWTSTPSFADMAMLSDDFCQAKMPALTHFYFDGEELTVSTARKLFERFPSAKIINAYGPTEATVALSAIEITREMVDNYTRLPIGYPKPDSPTYIIDEDGKELSSGEQGEIIVTGPAVSKGYLNNPEKTAEAFFTFKGQPAYHTGDIGSLTEDNILLYGGRLDFQIKYAGYRIELEDVSQQLNQSPMVASAVAVPRYNKEHKVQNLLAYIVVKDGVKERFDRELELTKAIKASVKDHMMSYMMPSKFLYRDSLPLTPNGKIDIKTLINEVNNR</sequence>
<organism>
    <name type="scientific">Streptococcus pyogenes serotype M6 (strain ATCC BAA-946 / MGAS10394)</name>
    <dbReference type="NCBI Taxonomy" id="286636"/>
    <lineage>
        <taxon>Bacteria</taxon>
        <taxon>Bacillati</taxon>
        <taxon>Bacillota</taxon>
        <taxon>Bacilli</taxon>
        <taxon>Lactobacillales</taxon>
        <taxon>Streptococcaceae</taxon>
        <taxon>Streptococcus</taxon>
    </lineage>
</organism>
<feature type="chain" id="PRO_0000213167" description="D-alanine--D-alanyl carrier protein ligase">
    <location>
        <begin position="1"/>
        <end position="512"/>
    </location>
</feature>
<feature type="binding site" evidence="1">
    <location>
        <begin position="152"/>
        <end position="153"/>
    </location>
    <ligand>
        <name>ATP</name>
        <dbReference type="ChEBI" id="CHEBI:30616"/>
    </ligand>
</feature>
<feature type="binding site" evidence="1">
    <location>
        <position position="199"/>
    </location>
    <ligand>
        <name>D-alanine</name>
        <dbReference type="ChEBI" id="CHEBI:57416"/>
    </ligand>
</feature>
<feature type="binding site" evidence="1">
    <location>
        <begin position="294"/>
        <end position="299"/>
    </location>
    <ligand>
        <name>ATP</name>
        <dbReference type="ChEBI" id="CHEBI:30616"/>
    </ligand>
</feature>
<feature type="binding site" evidence="1">
    <location>
        <position position="303"/>
    </location>
    <ligand>
        <name>D-alanine</name>
        <dbReference type="ChEBI" id="CHEBI:57416"/>
    </ligand>
</feature>
<feature type="binding site" evidence="1">
    <location>
        <position position="385"/>
    </location>
    <ligand>
        <name>ATP</name>
        <dbReference type="ChEBI" id="CHEBI:30616"/>
    </ligand>
</feature>
<feature type="binding site" evidence="1">
    <location>
        <begin position="397"/>
        <end position="400"/>
    </location>
    <ligand>
        <name>ATP</name>
        <dbReference type="ChEBI" id="CHEBI:30616"/>
    </ligand>
</feature>
<feature type="binding site" evidence="1">
    <location>
        <position position="499"/>
    </location>
    <ligand>
        <name>ATP</name>
        <dbReference type="ChEBI" id="CHEBI:30616"/>
    </ligand>
</feature>
<feature type="binding site" evidence="1">
    <location>
        <position position="499"/>
    </location>
    <ligand>
        <name>D-alanine</name>
        <dbReference type="ChEBI" id="CHEBI:57416"/>
    </ligand>
</feature>
<feature type="helix" evidence="2">
    <location>
        <begin position="5"/>
        <end position="15"/>
    </location>
</feature>
<feature type="strand" evidence="2">
    <location>
        <begin position="19"/>
        <end position="24"/>
    </location>
</feature>
<feature type="strand" evidence="2">
    <location>
        <begin position="27"/>
        <end position="30"/>
    </location>
</feature>
<feature type="helix" evidence="2">
    <location>
        <begin position="31"/>
        <end position="47"/>
    </location>
</feature>
<feature type="strand" evidence="2">
    <location>
        <begin position="56"/>
        <end position="60"/>
    </location>
</feature>
<feature type="helix" evidence="2">
    <location>
        <begin position="64"/>
        <end position="75"/>
    </location>
</feature>
<feature type="strand" evidence="2">
    <location>
        <begin position="80"/>
        <end position="84"/>
    </location>
</feature>
<feature type="helix" evidence="2">
    <location>
        <begin position="89"/>
        <end position="98"/>
    </location>
</feature>
<feature type="strand" evidence="2">
    <location>
        <begin position="102"/>
        <end position="108"/>
    </location>
</feature>
<feature type="strand" evidence="2">
    <location>
        <begin position="117"/>
        <end position="121"/>
    </location>
</feature>
<feature type="helix" evidence="2">
    <location>
        <begin position="122"/>
        <end position="131"/>
    </location>
</feature>
<feature type="strand" evidence="2">
    <location>
        <begin position="145"/>
        <end position="151"/>
    </location>
</feature>
<feature type="strand" evidence="2">
    <location>
        <begin position="161"/>
        <end position="165"/>
    </location>
</feature>
<feature type="helix" evidence="2">
    <location>
        <begin position="166"/>
        <end position="178"/>
    </location>
</feature>
<feature type="turn" evidence="2">
    <location>
        <begin position="180"/>
        <end position="182"/>
    </location>
</feature>
<feature type="strand" evidence="2">
    <location>
        <begin position="189"/>
        <end position="191"/>
    </location>
</feature>
<feature type="helix" evidence="2">
    <location>
        <begin position="199"/>
        <end position="201"/>
    </location>
</feature>
<feature type="helix" evidence="2">
    <location>
        <begin position="202"/>
        <end position="210"/>
    </location>
</feature>
<feature type="strand" evidence="2">
    <location>
        <begin position="214"/>
        <end position="217"/>
    </location>
</feature>
<feature type="helix" evidence="2">
    <location>
        <begin position="220"/>
        <end position="222"/>
    </location>
</feature>
<feature type="helix" evidence="2">
    <location>
        <begin position="226"/>
        <end position="235"/>
    </location>
</feature>
<feature type="strand" evidence="2">
    <location>
        <begin position="239"/>
        <end position="243"/>
    </location>
</feature>
<feature type="helix" evidence="2">
    <location>
        <begin position="245"/>
        <end position="252"/>
    </location>
</feature>
<feature type="turn" evidence="2">
    <location>
        <begin position="259"/>
        <end position="261"/>
    </location>
</feature>
<feature type="strand" evidence="2">
    <location>
        <begin position="267"/>
        <end position="270"/>
    </location>
</feature>
<feature type="helix" evidence="2">
    <location>
        <begin position="277"/>
        <end position="286"/>
    </location>
</feature>
<feature type="strand" evidence="2">
    <location>
        <begin position="291"/>
        <end position="296"/>
    </location>
</feature>
<feature type="helix" evidence="2">
    <location>
        <begin position="299"/>
        <end position="301"/>
    </location>
</feature>
<feature type="strand" evidence="2">
    <location>
        <begin position="305"/>
        <end position="310"/>
    </location>
</feature>
<feature type="helix" evidence="2">
    <location>
        <begin position="312"/>
        <end position="317"/>
    </location>
</feature>
<feature type="strand" evidence="2">
    <location>
        <begin position="322"/>
        <end position="326"/>
    </location>
</feature>
<feature type="strand" evidence="2">
    <location>
        <begin position="332"/>
        <end position="335"/>
    </location>
</feature>
<feature type="strand" evidence="2">
    <location>
        <begin position="348"/>
        <end position="354"/>
    </location>
</feature>
<feature type="helix" evidence="2">
    <location>
        <begin position="365"/>
        <end position="371"/>
    </location>
</feature>
<feature type="strand" evidence="2">
    <location>
        <begin position="372"/>
        <end position="375"/>
    </location>
</feature>
<feature type="strand" evidence="2">
    <location>
        <begin position="378"/>
        <end position="389"/>
    </location>
</feature>
<feature type="strand" evidence="2">
    <location>
        <begin position="391"/>
        <end position="393"/>
    </location>
</feature>
<feature type="strand" evidence="2">
    <location>
        <begin position="395"/>
        <end position="400"/>
    </location>
</feature>
<feature type="helix" evidence="2">
    <location>
        <begin position="401"/>
        <end position="403"/>
    </location>
</feature>
<feature type="helix" evidence="2">
    <location>
        <begin position="414"/>
        <end position="422"/>
    </location>
</feature>
<feature type="strand" evidence="2">
    <location>
        <begin position="427"/>
        <end position="433"/>
    </location>
</feature>
<feature type="strand" evidence="2">
    <location>
        <begin position="437"/>
        <end position="439"/>
    </location>
</feature>
<feature type="strand" evidence="2">
    <location>
        <begin position="442"/>
        <end position="444"/>
    </location>
</feature>
<feature type="strand" evidence="2">
    <location>
        <begin position="446"/>
        <end position="451"/>
    </location>
</feature>
<feature type="helix" evidence="2">
    <location>
        <begin position="456"/>
        <end position="458"/>
    </location>
</feature>
<feature type="helix" evidence="2">
    <location>
        <begin position="462"/>
        <end position="472"/>
    </location>
</feature>
<feature type="helix" evidence="2">
    <location>
        <begin position="474"/>
        <end position="476"/>
    </location>
</feature>
<feature type="helix" evidence="2">
    <location>
        <begin position="479"/>
        <end position="481"/>
    </location>
</feature>
<feature type="strand" evidence="2">
    <location>
        <begin position="484"/>
        <end position="488"/>
    </location>
</feature>
<feature type="strand" evidence="2">
    <location>
        <begin position="498"/>
        <end position="500"/>
    </location>
</feature>
<feature type="helix" evidence="2">
    <location>
        <begin position="502"/>
        <end position="508"/>
    </location>
</feature>